<gene>
    <name evidence="1" type="primary">ligA</name>
    <name type="ordered locus">Shewmr4_1508</name>
</gene>
<keyword id="KW-0227">DNA damage</keyword>
<keyword id="KW-0234">DNA repair</keyword>
<keyword id="KW-0235">DNA replication</keyword>
<keyword id="KW-0436">Ligase</keyword>
<keyword id="KW-0460">Magnesium</keyword>
<keyword id="KW-0464">Manganese</keyword>
<keyword id="KW-0479">Metal-binding</keyword>
<keyword id="KW-0520">NAD</keyword>
<keyword id="KW-0862">Zinc</keyword>
<name>DNLJ_SHESM</name>
<comment type="function">
    <text evidence="1">DNA ligase that catalyzes the formation of phosphodiester linkages between 5'-phosphoryl and 3'-hydroxyl groups in double-stranded DNA using NAD as a coenzyme and as the energy source for the reaction. It is essential for DNA replication and repair of damaged DNA.</text>
</comment>
<comment type="catalytic activity">
    <reaction evidence="1">
        <text>NAD(+) + (deoxyribonucleotide)n-3'-hydroxyl + 5'-phospho-(deoxyribonucleotide)m = (deoxyribonucleotide)n+m + AMP + beta-nicotinamide D-nucleotide.</text>
        <dbReference type="EC" id="6.5.1.2"/>
    </reaction>
</comment>
<comment type="cofactor">
    <cofactor evidence="1">
        <name>Mg(2+)</name>
        <dbReference type="ChEBI" id="CHEBI:18420"/>
    </cofactor>
    <cofactor evidence="1">
        <name>Mn(2+)</name>
        <dbReference type="ChEBI" id="CHEBI:29035"/>
    </cofactor>
</comment>
<comment type="similarity">
    <text evidence="1">Belongs to the NAD-dependent DNA ligase family. LigA subfamily.</text>
</comment>
<comment type="sequence caution" evidence="2">
    <conflict type="erroneous initiation">
        <sequence resource="EMBL-CDS" id="ABI38586"/>
    </conflict>
</comment>
<accession>Q0HK31</accession>
<evidence type="ECO:0000255" key="1">
    <source>
        <dbReference type="HAMAP-Rule" id="MF_01588"/>
    </source>
</evidence>
<evidence type="ECO:0000305" key="2"/>
<reference key="1">
    <citation type="submission" date="2006-08" db="EMBL/GenBank/DDBJ databases">
        <title>Complete sequence of Shewanella sp. MR-4.</title>
        <authorList>
            <consortium name="US DOE Joint Genome Institute"/>
            <person name="Copeland A."/>
            <person name="Lucas S."/>
            <person name="Lapidus A."/>
            <person name="Barry K."/>
            <person name="Detter J.C."/>
            <person name="Glavina del Rio T."/>
            <person name="Hammon N."/>
            <person name="Israni S."/>
            <person name="Dalin E."/>
            <person name="Tice H."/>
            <person name="Pitluck S."/>
            <person name="Kiss H."/>
            <person name="Brettin T."/>
            <person name="Bruce D."/>
            <person name="Han C."/>
            <person name="Tapia R."/>
            <person name="Gilna P."/>
            <person name="Schmutz J."/>
            <person name="Larimer F."/>
            <person name="Land M."/>
            <person name="Hauser L."/>
            <person name="Kyrpides N."/>
            <person name="Mikhailova N."/>
            <person name="Nealson K."/>
            <person name="Konstantinidis K."/>
            <person name="Klappenbach J."/>
            <person name="Tiedje J."/>
            <person name="Richardson P."/>
        </authorList>
    </citation>
    <scope>NUCLEOTIDE SEQUENCE [LARGE SCALE GENOMIC DNA]</scope>
    <source>
        <strain>MR-4</strain>
    </source>
</reference>
<proteinExistence type="inferred from homology"/>
<sequence length="688" mass="75246">MQDIQLDKRLSELLSQAVTPHNAQPLMQALCQSLNEHNIRYYVDDAPSITDSEYDRLMQRLKQLEAEYPQFVAADSPTQRVGGMALAKFEQITHLKPMLSLDNAFDEADFSAFHKRVSDRVGEVSFCCEPKLDGLAVSILYRNGVLERAATRGDGTVGEDITENVKTIKSIPLKLRGDNYPELVEVRGEAFMPKAAFEALNERARLKDEKLFVNPRNAAAGSLRQLDSKITASRALSFYAYALGVVEPTSHELAKTHYEQLQQLKSWGLPVSSEIKVCDELSQVFAYYQDILTRRSYLPFEIDGVVMKVNDIAQQQTLGFVAKSPRWAIAYKFPAQEEMTLLEGVDFQVGRTGAVTPVARLKPVFVGGVTVSNATLHNADEIERLGVMVGDTVIIRRAGDVIPQIVAIVPERRPEDAKAIAFPQHCPVCGSLVERLEGEAVTRCSGGLFCEAQRKEAIKHFASRKALDIDGMGDKIVEQLIDKELVQSPADLFKLPASMMTMLDRMGMKSATNLAQAIEAAKTTTLPRFLYALGIREVGEATASNLATHFGSLEALRVATIEQLIQVEDIGEVVAQHVAHFFAQPHNLEVIDALIAAGVNWPTIAAPSADEQPLKGQTWVLTGTLNQLNRNDAKAQLQALGAKVAGSVSKNTDCLVAGEAAGSKLAKAQELGVKVIGEDELLALLANS</sequence>
<protein>
    <recommendedName>
        <fullName evidence="1">DNA ligase</fullName>
        <ecNumber evidence="1">6.5.1.2</ecNumber>
    </recommendedName>
    <alternativeName>
        <fullName evidence="1">Polydeoxyribonucleotide synthase [NAD(+)]</fullName>
    </alternativeName>
</protein>
<feature type="chain" id="PRO_0000313431" description="DNA ligase">
    <location>
        <begin position="1"/>
        <end position="688"/>
    </location>
</feature>
<feature type="domain" description="BRCT" evidence="1">
    <location>
        <begin position="609"/>
        <end position="688"/>
    </location>
</feature>
<feature type="active site" description="N6-AMP-lysine intermediate" evidence="1">
    <location>
        <position position="131"/>
    </location>
</feature>
<feature type="binding site" evidence="1">
    <location>
        <begin position="51"/>
        <end position="55"/>
    </location>
    <ligand>
        <name>NAD(+)</name>
        <dbReference type="ChEBI" id="CHEBI:57540"/>
    </ligand>
</feature>
<feature type="binding site" evidence="1">
    <location>
        <begin position="100"/>
        <end position="101"/>
    </location>
    <ligand>
        <name>NAD(+)</name>
        <dbReference type="ChEBI" id="CHEBI:57540"/>
    </ligand>
</feature>
<feature type="binding site" evidence="1">
    <location>
        <position position="129"/>
    </location>
    <ligand>
        <name>NAD(+)</name>
        <dbReference type="ChEBI" id="CHEBI:57540"/>
    </ligand>
</feature>
<feature type="binding site" evidence="1">
    <location>
        <position position="152"/>
    </location>
    <ligand>
        <name>NAD(+)</name>
        <dbReference type="ChEBI" id="CHEBI:57540"/>
    </ligand>
</feature>
<feature type="binding site" evidence="1">
    <location>
        <position position="189"/>
    </location>
    <ligand>
        <name>NAD(+)</name>
        <dbReference type="ChEBI" id="CHEBI:57540"/>
    </ligand>
</feature>
<feature type="binding site" evidence="1">
    <location>
        <position position="308"/>
    </location>
    <ligand>
        <name>NAD(+)</name>
        <dbReference type="ChEBI" id="CHEBI:57540"/>
    </ligand>
</feature>
<feature type="binding site" evidence="1">
    <location>
        <position position="332"/>
    </location>
    <ligand>
        <name>NAD(+)</name>
        <dbReference type="ChEBI" id="CHEBI:57540"/>
    </ligand>
</feature>
<feature type="binding site" evidence="1">
    <location>
        <position position="426"/>
    </location>
    <ligand>
        <name>Zn(2+)</name>
        <dbReference type="ChEBI" id="CHEBI:29105"/>
    </ligand>
</feature>
<feature type="binding site" evidence="1">
    <location>
        <position position="429"/>
    </location>
    <ligand>
        <name>Zn(2+)</name>
        <dbReference type="ChEBI" id="CHEBI:29105"/>
    </ligand>
</feature>
<feature type="binding site" evidence="1">
    <location>
        <position position="444"/>
    </location>
    <ligand>
        <name>Zn(2+)</name>
        <dbReference type="ChEBI" id="CHEBI:29105"/>
    </ligand>
</feature>
<feature type="binding site" evidence="1">
    <location>
        <position position="450"/>
    </location>
    <ligand>
        <name>Zn(2+)</name>
        <dbReference type="ChEBI" id="CHEBI:29105"/>
    </ligand>
</feature>
<organism>
    <name type="scientific">Shewanella sp. (strain MR-4)</name>
    <dbReference type="NCBI Taxonomy" id="60480"/>
    <lineage>
        <taxon>Bacteria</taxon>
        <taxon>Pseudomonadati</taxon>
        <taxon>Pseudomonadota</taxon>
        <taxon>Gammaproteobacteria</taxon>
        <taxon>Alteromonadales</taxon>
        <taxon>Shewanellaceae</taxon>
        <taxon>Shewanella</taxon>
    </lineage>
</organism>
<dbReference type="EC" id="6.5.1.2" evidence="1"/>
<dbReference type="EMBL" id="CP000446">
    <property type="protein sequence ID" value="ABI38586.1"/>
    <property type="status" value="ALT_INIT"/>
    <property type="molecule type" value="Genomic_DNA"/>
</dbReference>
<dbReference type="RefSeq" id="WP_041409017.1">
    <property type="nucleotide sequence ID" value="NC_008321.1"/>
</dbReference>
<dbReference type="SMR" id="Q0HK31"/>
<dbReference type="KEGG" id="she:Shewmr4_1508"/>
<dbReference type="HOGENOM" id="CLU_007764_2_1_6"/>
<dbReference type="GO" id="GO:0005829">
    <property type="term" value="C:cytosol"/>
    <property type="evidence" value="ECO:0007669"/>
    <property type="project" value="TreeGrafter"/>
</dbReference>
<dbReference type="GO" id="GO:0003677">
    <property type="term" value="F:DNA binding"/>
    <property type="evidence" value="ECO:0007669"/>
    <property type="project" value="InterPro"/>
</dbReference>
<dbReference type="GO" id="GO:0003911">
    <property type="term" value="F:DNA ligase (NAD+) activity"/>
    <property type="evidence" value="ECO:0007669"/>
    <property type="project" value="UniProtKB-UniRule"/>
</dbReference>
<dbReference type="GO" id="GO:0046872">
    <property type="term" value="F:metal ion binding"/>
    <property type="evidence" value="ECO:0007669"/>
    <property type="project" value="UniProtKB-KW"/>
</dbReference>
<dbReference type="GO" id="GO:0006281">
    <property type="term" value="P:DNA repair"/>
    <property type="evidence" value="ECO:0007669"/>
    <property type="project" value="UniProtKB-KW"/>
</dbReference>
<dbReference type="GO" id="GO:0006260">
    <property type="term" value="P:DNA replication"/>
    <property type="evidence" value="ECO:0007669"/>
    <property type="project" value="UniProtKB-KW"/>
</dbReference>
<dbReference type="CDD" id="cd17748">
    <property type="entry name" value="BRCT_DNA_ligase_like"/>
    <property type="match status" value="1"/>
</dbReference>
<dbReference type="CDD" id="cd00114">
    <property type="entry name" value="LIGANc"/>
    <property type="match status" value="1"/>
</dbReference>
<dbReference type="FunFam" id="1.10.150.20:FF:000006">
    <property type="entry name" value="DNA ligase"/>
    <property type="match status" value="1"/>
</dbReference>
<dbReference type="FunFam" id="1.10.150.20:FF:000007">
    <property type="entry name" value="DNA ligase"/>
    <property type="match status" value="1"/>
</dbReference>
<dbReference type="FunFam" id="1.10.287.610:FF:000002">
    <property type="entry name" value="DNA ligase"/>
    <property type="match status" value="1"/>
</dbReference>
<dbReference type="FunFam" id="2.40.50.140:FF:000012">
    <property type="entry name" value="DNA ligase"/>
    <property type="match status" value="1"/>
</dbReference>
<dbReference type="FunFam" id="3.30.470.30:FF:000001">
    <property type="entry name" value="DNA ligase"/>
    <property type="match status" value="1"/>
</dbReference>
<dbReference type="FunFam" id="6.20.10.30:FF:000001">
    <property type="entry name" value="DNA ligase"/>
    <property type="match status" value="1"/>
</dbReference>
<dbReference type="Gene3D" id="6.20.10.30">
    <property type="match status" value="1"/>
</dbReference>
<dbReference type="Gene3D" id="1.10.150.20">
    <property type="entry name" value="5' to 3' exonuclease, C-terminal subdomain"/>
    <property type="match status" value="2"/>
</dbReference>
<dbReference type="Gene3D" id="3.40.50.10190">
    <property type="entry name" value="BRCT domain"/>
    <property type="match status" value="1"/>
</dbReference>
<dbReference type="Gene3D" id="3.30.470.30">
    <property type="entry name" value="DNA ligase/mRNA capping enzyme"/>
    <property type="match status" value="1"/>
</dbReference>
<dbReference type="Gene3D" id="1.10.287.610">
    <property type="entry name" value="Helix hairpin bin"/>
    <property type="match status" value="1"/>
</dbReference>
<dbReference type="Gene3D" id="2.40.50.140">
    <property type="entry name" value="Nucleic acid-binding proteins"/>
    <property type="match status" value="1"/>
</dbReference>
<dbReference type="HAMAP" id="MF_01588">
    <property type="entry name" value="DNA_ligase_A"/>
    <property type="match status" value="1"/>
</dbReference>
<dbReference type="InterPro" id="IPR001357">
    <property type="entry name" value="BRCT_dom"/>
</dbReference>
<dbReference type="InterPro" id="IPR036420">
    <property type="entry name" value="BRCT_dom_sf"/>
</dbReference>
<dbReference type="InterPro" id="IPR041663">
    <property type="entry name" value="DisA/LigA_HHH"/>
</dbReference>
<dbReference type="InterPro" id="IPR001679">
    <property type="entry name" value="DNA_ligase"/>
</dbReference>
<dbReference type="InterPro" id="IPR018239">
    <property type="entry name" value="DNA_ligase_AS"/>
</dbReference>
<dbReference type="InterPro" id="IPR033136">
    <property type="entry name" value="DNA_ligase_CS"/>
</dbReference>
<dbReference type="InterPro" id="IPR013839">
    <property type="entry name" value="DNAligase_adenylation"/>
</dbReference>
<dbReference type="InterPro" id="IPR013840">
    <property type="entry name" value="DNAligase_N"/>
</dbReference>
<dbReference type="InterPro" id="IPR003583">
    <property type="entry name" value="Hlx-hairpin-Hlx_DNA-bd_motif"/>
</dbReference>
<dbReference type="InterPro" id="IPR012340">
    <property type="entry name" value="NA-bd_OB-fold"/>
</dbReference>
<dbReference type="InterPro" id="IPR004150">
    <property type="entry name" value="NAD_DNA_ligase_OB"/>
</dbReference>
<dbReference type="InterPro" id="IPR010994">
    <property type="entry name" value="RuvA_2-like"/>
</dbReference>
<dbReference type="InterPro" id="IPR004149">
    <property type="entry name" value="Znf_DNAligase_C4"/>
</dbReference>
<dbReference type="NCBIfam" id="TIGR00575">
    <property type="entry name" value="dnlj"/>
    <property type="match status" value="1"/>
</dbReference>
<dbReference type="NCBIfam" id="NF005932">
    <property type="entry name" value="PRK07956.1"/>
    <property type="match status" value="1"/>
</dbReference>
<dbReference type="PANTHER" id="PTHR23389">
    <property type="entry name" value="CHROMOSOME TRANSMISSION FIDELITY FACTOR 18"/>
    <property type="match status" value="1"/>
</dbReference>
<dbReference type="PANTHER" id="PTHR23389:SF9">
    <property type="entry name" value="DNA LIGASE"/>
    <property type="match status" value="1"/>
</dbReference>
<dbReference type="Pfam" id="PF00533">
    <property type="entry name" value="BRCT"/>
    <property type="match status" value="1"/>
</dbReference>
<dbReference type="Pfam" id="PF01653">
    <property type="entry name" value="DNA_ligase_aden"/>
    <property type="match status" value="1"/>
</dbReference>
<dbReference type="Pfam" id="PF03120">
    <property type="entry name" value="DNA_ligase_OB"/>
    <property type="match status" value="1"/>
</dbReference>
<dbReference type="Pfam" id="PF03119">
    <property type="entry name" value="DNA_ligase_ZBD"/>
    <property type="match status" value="1"/>
</dbReference>
<dbReference type="Pfam" id="PF12826">
    <property type="entry name" value="HHH_2"/>
    <property type="match status" value="1"/>
</dbReference>
<dbReference type="PIRSF" id="PIRSF001604">
    <property type="entry name" value="LigA"/>
    <property type="match status" value="1"/>
</dbReference>
<dbReference type="SMART" id="SM00292">
    <property type="entry name" value="BRCT"/>
    <property type="match status" value="1"/>
</dbReference>
<dbReference type="SMART" id="SM00278">
    <property type="entry name" value="HhH1"/>
    <property type="match status" value="3"/>
</dbReference>
<dbReference type="SMART" id="SM00532">
    <property type="entry name" value="LIGANc"/>
    <property type="match status" value="1"/>
</dbReference>
<dbReference type="SUPFAM" id="SSF52113">
    <property type="entry name" value="BRCT domain"/>
    <property type="match status" value="1"/>
</dbReference>
<dbReference type="SUPFAM" id="SSF56091">
    <property type="entry name" value="DNA ligase/mRNA capping enzyme, catalytic domain"/>
    <property type="match status" value="1"/>
</dbReference>
<dbReference type="SUPFAM" id="SSF50249">
    <property type="entry name" value="Nucleic acid-binding proteins"/>
    <property type="match status" value="1"/>
</dbReference>
<dbReference type="SUPFAM" id="SSF47781">
    <property type="entry name" value="RuvA domain 2-like"/>
    <property type="match status" value="1"/>
</dbReference>
<dbReference type="PROSITE" id="PS50172">
    <property type="entry name" value="BRCT"/>
    <property type="match status" value="1"/>
</dbReference>
<dbReference type="PROSITE" id="PS01055">
    <property type="entry name" value="DNA_LIGASE_N1"/>
    <property type="match status" value="1"/>
</dbReference>
<dbReference type="PROSITE" id="PS01056">
    <property type="entry name" value="DNA_LIGASE_N2"/>
    <property type="match status" value="1"/>
</dbReference>